<comment type="function">
    <text evidence="1">An accessory protein needed during the final step in the assembly of 30S ribosomal subunit, possibly for assembly of the head region. Essential for efficient processing of 16S rRNA. May be needed both before and after RbfA during the maturation of 16S rRNA. It has affinity for free ribosomal 30S subunits but not for 70S ribosomes.</text>
</comment>
<comment type="subunit">
    <text evidence="1">Binds ribosomal protein uS19.</text>
</comment>
<comment type="subcellular location">
    <subcellularLocation>
        <location evidence="1">Cytoplasm</location>
    </subcellularLocation>
</comment>
<comment type="domain">
    <text evidence="1">The PRC barrel domain binds ribosomal protein uS19.</text>
</comment>
<comment type="similarity">
    <text evidence="1">Belongs to the RimM family.</text>
</comment>
<sequence>MTEYFEVGKILSPHGLKGEVKVNATTDFPEERLANGSRLFIKNSDQYQELIVDGARRHKQFYLVKFEEIDGIDQAEKVCGKELYVAETDQQELPEGSYYFKDILNCPVYDAETGEKLGVLANIETPGANDIWEIKPEHGKSFWIPNIESVVNKVDLANKRIEVTLLEGLRDEN</sequence>
<organism>
    <name type="scientific">Lactobacillus gasseri (strain ATCC 33323 / DSM 20243 / BCRC 14619 / CIP 102991 / JCM 1131 / KCTC 3163 / NCIMB 11718 / NCTC 13722 / AM63)</name>
    <dbReference type="NCBI Taxonomy" id="324831"/>
    <lineage>
        <taxon>Bacteria</taxon>
        <taxon>Bacillati</taxon>
        <taxon>Bacillota</taxon>
        <taxon>Bacilli</taxon>
        <taxon>Lactobacillales</taxon>
        <taxon>Lactobacillaceae</taxon>
        <taxon>Lactobacillus</taxon>
    </lineage>
</organism>
<evidence type="ECO:0000255" key="1">
    <source>
        <dbReference type="HAMAP-Rule" id="MF_00014"/>
    </source>
</evidence>
<feature type="chain" id="PRO_1000001185" description="Ribosome maturation factor RimM">
    <location>
        <begin position="1"/>
        <end position="173"/>
    </location>
</feature>
<feature type="domain" description="PRC barrel" evidence="1">
    <location>
        <begin position="95"/>
        <end position="169"/>
    </location>
</feature>
<dbReference type="EMBL" id="CP000413">
    <property type="protein sequence ID" value="ABJ60178.1"/>
    <property type="molecule type" value="Genomic_DNA"/>
</dbReference>
<dbReference type="RefSeq" id="WP_003647504.1">
    <property type="nucleotide sequence ID" value="NZ_WBMG01000005.1"/>
</dbReference>
<dbReference type="SMR" id="Q044E4"/>
<dbReference type="GeneID" id="29638991"/>
<dbReference type="KEGG" id="lga:LGAS_0787"/>
<dbReference type="HOGENOM" id="CLU_077636_3_1_9"/>
<dbReference type="BioCyc" id="LGAS324831:G1G6Y-781-MONOMER"/>
<dbReference type="Proteomes" id="UP000000664">
    <property type="component" value="Chromosome"/>
</dbReference>
<dbReference type="GO" id="GO:0005737">
    <property type="term" value="C:cytoplasm"/>
    <property type="evidence" value="ECO:0007669"/>
    <property type="project" value="UniProtKB-SubCell"/>
</dbReference>
<dbReference type="GO" id="GO:0005840">
    <property type="term" value="C:ribosome"/>
    <property type="evidence" value="ECO:0007669"/>
    <property type="project" value="InterPro"/>
</dbReference>
<dbReference type="GO" id="GO:0043022">
    <property type="term" value="F:ribosome binding"/>
    <property type="evidence" value="ECO:0007669"/>
    <property type="project" value="InterPro"/>
</dbReference>
<dbReference type="GO" id="GO:0042274">
    <property type="term" value="P:ribosomal small subunit biogenesis"/>
    <property type="evidence" value="ECO:0007669"/>
    <property type="project" value="UniProtKB-UniRule"/>
</dbReference>
<dbReference type="GO" id="GO:0006364">
    <property type="term" value="P:rRNA processing"/>
    <property type="evidence" value="ECO:0007669"/>
    <property type="project" value="UniProtKB-UniRule"/>
</dbReference>
<dbReference type="Gene3D" id="2.30.30.240">
    <property type="entry name" value="PRC-barrel domain"/>
    <property type="match status" value="1"/>
</dbReference>
<dbReference type="Gene3D" id="2.40.30.60">
    <property type="entry name" value="RimM"/>
    <property type="match status" value="1"/>
</dbReference>
<dbReference type="HAMAP" id="MF_00014">
    <property type="entry name" value="Ribosome_mat_RimM"/>
    <property type="match status" value="1"/>
</dbReference>
<dbReference type="InterPro" id="IPR011033">
    <property type="entry name" value="PRC_barrel-like_sf"/>
</dbReference>
<dbReference type="InterPro" id="IPR056792">
    <property type="entry name" value="PRC_RimM"/>
</dbReference>
<dbReference type="InterPro" id="IPR011961">
    <property type="entry name" value="RimM"/>
</dbReference>
<dbReference type="InterPro" id="IPR002676">
    <property type="entry name" value="RimM_N"/>
</dbReference>
<dbReference type="InterPro" id="IPR036976">
    <property type="entry name" value="RimM_N_sf"/>
</dbReference>
<dbReference type="InterPro" id="IPR009000">
    <property type="entry name" value="Transl_B-barrel_sf"/>
</dbReference>
<dbReference type="NCBIfam" id="TIGR02273">
    <property type="entry name" value="16S_RimM"/>
    <property type="match status" value="1"/>
</dbReference>
<dbReference type="PANTHER" id="PTHR33692">
    <property type="entry name" value="RIBOSOME MATURATION FACTOR RIMM"/>
    <property type="match status" value="1"/>
</dbReference>
<dbReference type="PANTHER" id="PTHR33692:SF1">
    <property type="entry name" value="RIBOSOME MATURATION FACTOR RIMM"/>
    <property type="match status" value="1"/>
</dbReference>
<dbReference type="Pfam" id="PF24986">
    <property type="entry name" value="PRC_RimM"/>
    <property type="match status" value="1"/>
</dbReference>
<dbReference type="Pfam" id="PF01782">
    <property type="entry name" value="RimM"/>
    <property type="match status" value="1"/>
</dbReference>
<dbReference type="SUPFAM" id="SSF50346">
    <property type="entry name" value="PRC-barrel domain"/>
    <property type="match status" value="1"/>
</dbReference>
<dbReference type="SUPFAM" id="SSF50447">
    <property type="entry name" value="Translation proteins"/>
    <property type="match status" value="1"/>
</dbReference>
<proteinExistence type="inferred from homology"/>
<protein>
    <recommendedName>
        <fullName evidence="1">Ribosome maturation factor RimM</fullName>
    </recommendedName>
</protein>
<reference key="1">
    <citation type="journal article" date="2006" name="Proc. Natl. Acad. Sci. U.S.A.">
        <title>Comparative genomics of the lactic acid bacteria.</title>
        <authorList>
            <person name="Makarova K.S."/>
            <person name="Slesarev A."/>
            <person name="Wolf Y.I."/>
            <person name="Sorokin A."/>
            <person name="Mirkin B."/>
            <person name="Koonin E.V."/>
            <person name="Pavlov A."/>
            <person name="Pavlova N."/>
            <person name="Karamychev V."/>
            <person name="Polouchine N."/>
            <person name="Shakhova V."/>
            <person name="Grigoriev I."/>
            <person name="Lou Y."/>
            <person name="Rohksar D."/>
            <person name="Lucas S."/>
            <person name="Huang K."/>
            <person name="Goodstein D.M."/>
            <person name="Hawkins T."/>
            <person name="Plengvidhya V."/>
            <person name="Welker D."/>
            <person name="Hughes J."/>
            <person name="Goh Y."/>
            <person name="Benson A."/>
            <person name="Baldwin K."/>
            <person name="Lee J.-H."/>
            <person name="Diaz-Muniz I."/>
            <person name="Dosti B."/>
            <person name="Smeianov V."/>
            <person name="Wechter W."/>
            <person name="Barabote R."/>
            <person name="Lorca G."/>
            <person name="Altermann E."/>
            <person name="Barrangou R."/>
            <person name="Ganesan B."/>
            <person name="Xie Y."/>
            <person name="Rawsthorne H."/>
            <person name="Tamir D."/>
            <person name="Parker C."/>
            <person name="Breidt F."/>
            <person name="Broadbent J.R."/>
            <person name="Hutkins R."/>
            <person name="O'Sullivan D."/>
            <person name="Steele J."/>
            <person name="Unlu G."/>
            <person name="Saier M.H. Jr."/>
            <person name="Klaenhammer T."/>
            <person name="Richardson P."/>
            <person name="Kozyavkin S."/>
            <person name="Weimer B.C."/>
            <person name="Mills D.A."/>
        </authorList>
    </citation>
    <scope>NUCLEOTIDE SEQUENCE [LARGE SCALE GENOMIC DNA]</scope>
    <source>
        <strain>ATCC 33323 / DSM 20243 / BCRC 14619 / CIP 102991 / JCM 1131 / KCTC 3163 / NCIMB 11718 / NCTC 13722 / AM63</strain>
    </source>
</reference>
<name>RIMM_LACGA</name>
<gene>
    <name evidence="1" type="primary">rimM</name>
    <name type="ordered locus">LGAS_0787</name>
</gene>
<accession>Q044E4</accession>
<keyword id="KW-0143">Chaperone</keyword>
<keyword id="KW-0963">Cytoplasm</keyword>
<keyword id="KW-0690">Ribosome biogenesis</keyword>
<keyword id="KW-0698">rRNA processing</keyword>